<proteinExistence type="evidence at transcript level"/>
<evidence type="ECO:0000250" key="1">
    <source>
        <dbReference type="UniProtKB" id="P04798"/>
    </source>
</evidence>
<evidence type="ECO:0000255" key="2"/>
<evidence type="ECO:0000269" key="3">
    <source>
    </source>
</evidence>
<evidence type="ECO:0000303" key="4">
    <source>
    </source>
</evidence>
<evidence type="ECO:0000305" key="5"/>
<evidence type="ECO:0000305" key="6">
    <source>
    </source>
</evidence>
<feature type="chain" id="PRO_0000454916" description="Cytochrome P450 monooxygenase iboC">
    <location>
        <begin position="1"/>
        <end position="561"/>
    </location>
</feature>
<feature type="transmembrane region" description="Helical" evidence="2">
    <location>
        <begin position="8"/>
        <end position="28"/>
    </location>
</feature>
<feature type="binding site" description="axial binding residue" evidence="1">
    <location>
        <position position="484"/>
    </location>
    <ligand>
        <name>heme</name>
        <dbReference type="ChEBI" id="CHEBI:30413"/>
    </ligand>
    <ligandPart>
        <name>Fe</name>
        <dbReference type="ChEBI" id="CHEBI:18248"/>
    </ligandPart>
</feature>
<organism>
    <name type="scientific">Amanita muscaria (strain Koide BX008)</name>
    <dbReference type="NCBI Taxonomy" id="946122"/>
    <lineage>
        <taxon>Eukaryota</taxon>
        <taxon>Fungi</taxon>
        <taxon>Dikarya</taxon>
        <taxon>Basidiomycota</taxon>
        <taxon>Agaricomycotina</taxon>
        <taxon>Agaricomycetes</taxon>
        <taxon>Agaricomycetidae</taxon>
        <taxon>Agaricales</taxon>
        <taxon>Pluteineae</taxon>
        <taxon>Amanitaceae</taxon>
        <taxon>Amanita</taxon>
    </lineage>
</organism>
<dbReference type="EC" id="1.-.-.-" evidence="6"/>
<dbReference type="EMBL" id="KN818402">
    <property type="protein sequence ID" value="KIL56737.1"/>
    <property type="molecule type" value="Genomic_DNA"/>
</dbReference>
<dbReference type="SMR" id="A0A0C2W6G6"/>
<dbReference type="STRING" id="946122.A0A0C2W6G6"/>
<dbReference type="HOGENOM" id="CLU_001570_2_3_1"/>
<dbReference type="InParanoid" id="A0A0C2W6G6"/>
<dbReference type="OrthoDB" id="2789670at2759"/>
<dbReference type="BioCyc" id="MetaCyc:MONOMER-21259"/>
<dbReference type="Proteomes" id="UP000054549">
    <property type="component" value="Unassembled WGS sequence"/>
</dbReference>
<dbReference type="GO" id="GO:0016020">
    <property type="term" value="C:membrane"/>
    <property type="evidence" value="ECO:0007669"/>
    <property type="project" value="UniProtKB-SubCell"/>
</dbReference>
<dbReference type="GO" id="GO:0020037">
    <property type="term" value="F:heme binding"/>
    <property type="evidence" value="ECO:0007669"/>
    <property type="project" value="InterPro"/>
</dbReference>
<dbReference type="GO" id="GO:0005506">
    <property type="term" value="F:iron ion binding"/>
    <property type="evidence" value="ECO:0007669"/>
    <property type="project" value="InterPro"/>
</dbReference>
<dbReference type="GO" id="GO:0004497">
    <property type="term" value="F:monooxygenase activity"/>
    <property type="evidence" value="ECO:0007669"/>
    <property type="project" value="UniProtKB-KW"/>
</dbReference>
<dbReference type="GO" id="GO:0016705">
    <property type="term" value="F:oxidoreductase activity, acting on paired donors, with incorporation or reduction of molecular oxygen"/>
    <property type="evidence" value="ECO:0007669"/>
    <property type="project" value="InterPro"/>
</dbReference>
<dbReference type="CDD" id="cd11065">
    <property type="entry name" value="CYP64-like"/>
    <property type="match status" value="1"/>
</dbReference>
<dbReference type="Gene3D" id="1.10.630.10">
    <property type="entry name" value="Cytochrome P450"/>
    <property type="match status" value="1"/>
</dbReference>
<dbReference type="InterPro" id="IPR001128">
    <property type="entry name" value="Cyt_P450"/>
</dbReference>
<dbReference type="InterPro" id="IPR002401">
    <property type="entry name" value="Cyt_P450_E_grp-I"/>
</dbReference>
<dbReference type="InterPro" id="IPR036396">
    <property type="entry name" value="Cyt_P450_sf"/>
</dbReference>
<dbReference type="InterPro" id="IPR050364">
    <property type="entry name" value="Cytochrome_P450_fung"/>
</dbReference>
<dbReference type="PANTHER" id="PTHR46300:SF5">
    <property type="entry name" value="CYTOCHROME P450"/>
    <property type="match status" value="1"/>
</dbReference>
<dbReference type="PANTHER" id="PTHR46300">
    <property type="entry name" value="P450, PUTATIVE (EUROFUNG)-RELATED-RELATED"/>
    <property type="match status" value="1"/>
</dbReference>
<dbReference type="Pfam" id="PF00067">
    <property type="entry name" value="p450"/>
    <property type="match status" value="1"/>
</dbReference>
<dbReference type="PRINTS" id="PR00463">
    <property type="entry name" value="EP450I"/>
</dbReference>
<dbReference type="SUPFAM" id="SSF48264">
    <property type="entry name" value="Cytochrome P450"/>
    <property type="match status" value="1"/>
</dbReference>
<keyword id="KW-0349">Heme</keyword>
<keyword id="KW-0408">Iron</keyword>
<keyword id="KW-0472">Membrane</keyword>
<keyword id="KW-0479">Metal-binding</keyword>
<keyword id="KW-0503">Monooxygenase</keyword>
<keyword id="KW-0560">Oxidoreductase</keyword>
<keyword id="KW-1185">Reference proteome</keyword>
<keyword id="KW-0812">Transmembrane</keyword>
<keyword id="KW-1133">Transmembrane helix</keyword>
<sequence length="561" mass="63122">MTLQSESRFYYQLLAAVLIPALFVAWAARLRQNRKYPPGPKGIPIFGNLFQLSTRPWIEFSAFKEQYGPLVYLNIVGQPLLITNTHTAATDLFDRRGGVYSDRPRSIVADYLTGGLYLPFARHGPTWLKLRRAGHAFMHKGVAHKYRDTQFKEALTLTHHLLQSPSGRRRQLFESAEASIHSIVYDQPSSGGPVYPKMTDFSTLINKAVTPLFTPAEFLPLMQYVPSWLAGWKRRAQQGFVLFSELCEGLLEEVAKRVDAGDDRPSMAGGLIREREKHGLTNLEAAWLSGMMILVGTETNTLAMSWFLYAMIAYPDKQKRCQAELDAVVGRSRMPTFEDLEKLPYLRATIREILRWRPSIPVGARHYTTKDDWYQGYFIPKGTICFPNVWSLNHDPAIYGTDADHFNPGRFIDKDGGLSPAIPATKDGAFLIPHHDLHNSHGLNPPKMQKVCLRFIDLHTFRSKYPLSIAVPGHVSYGFGSRICLGRHIANDALFINFASILWATSISPAMNANTGKPDVPDKLAYSNLGLLIVPTTTECVIQPRFDEAEGILAQTRELCM</sequence>
<reference key="1">
    <citation type="journal article" date="2015" name="Nat. Genet.">
        <title>Convergent losses of decay mechanisms and rapid turnover of symbiosis genes in mycorrhizal mutualists.</title>
        <authorList>
            <consortium name="Mycorrhizal Genomics Initiative Consortium"/>
            <person name="Kohler A."/>
            <person name="Kuo A."/>
            <person name="Nagy L.G."/>
            <person name="Morin E."/>
            <person name="Barry K.W."/>
            <person name="Buscot F."/>
            <person name="Canbaeck B."/>
            <person name="Choi C."/>
            <person name="Cichocki N."/>
            <person name="Clum A."/>
            <person name="Colpaert J."/>
            <person name="Copeland A."/>
            <person name="Costa M.D."/>
            <person name="Dore J."/>
            <person name="Floudas D."/>
            <person name="Gay G."/>
            <person name="Girlanda M."/>
            <person name="Henrissat B."/>
            <person name="Herrmann S."/>
            <person name="Hess J."/>
            <person name="Hoegberg N."/>
            <person name="Johansson T."/>
            <person name="Khouja H.R."/>
            <person name="LaButti K."/>
            <person name="Lahrmann U."/>
            <person name="Levasseur A."/>
            <person name="Lindquist E.A."/>
            <person name="Lipzen A."/>
            <person name="Marmeisse R."/>
            <person name="Martino E."/>
            <person name="Murat C."/>
            <person name="Ngan C.Y."/>
            <person name="Nehls U."/>
            <person name="Plett J.M."/>
            <person name="Pringle A."/>
            <person name="Ohm R.A."/>
            <person name="Perotto S."/>
            <person name="Peter M."/>
            <person name="Riley R."/>
            <person name="Rineau F."/>
            <person name="Ruytinx J."/>
            <person name="Salamov A."/>
            <person name="Shah F."/>
            <person name="Sun H."/>
            <person name="Tarkka M."/>
            <person name="Tritt A."/>
            <person name="Veneault-Fourrey C."/>
            <person name="Zuccaro A."/>
            <person name="Tunlid A."/>
            <person name="Grigoriev I.V."/>
            <person name="Hibbett D.S."/>
            <person name="Martin F."/>
        </authorList>
    </citation>
    <scope>NUCLEOTIDE SEQUENCE [LARGE SCALE GENOMIC DNA]</scope>
    <source>
        <strain>Koide BX008</strain>
    </source>
</reference>
<reference key="2">
    <citation type="journal article" date="2020" name="Angew. Chem. Int. Ed.">
        <title>Ibotenic acid biosynthesis in the fly agaric is initiated by glutamate hydroxylation.</title>
        <authorList>
            <person name="Obermaier S."/>
            <person name="Mueller M."/>
        </authorList>
    </citation>
    <scope>FUNCTION</scope>
    <scope>INDUCTION</scope>
    <scope>PATHWAY</scope>
</reference>
<accession>A0A0C2W6G6</accession>
<protein>
    <recommendedName>
        <fullName evidence="4">Cytochrome P450 monooxygenase iboC</fullName>
        <ecNumber evidence="6">1.-.-.-</ecNumber>
    </recommendedName>
    <alternativeName>
        <fullName evidence="4">Ibotenic acid biosynthesis cluster protein C</fullName>
    </alternativeName>
</protein>
<comment type="function">
    <text evidence="3 6">Cytochrome P450 monooxygenase; part of the gene cluster that mediates the biosynthesis of the psychoactive metabolites ibotenic acid and muscimol (PubMed:32233056). The first committed step is glutamate hydroxylation by the 2-oxoglutarate-dependent dioxygenase iboH, and the last step is decarboxylation of ibotenic acid to muscimol by the decarboxylase iboD (PubMed:32233056). The order of the intermediate reactions is somewhat ambiguous (Probable). IboA likely activates the carboxylic acid at position 5 to introduce an amide bond, and the flavin monooxygenase iboF generates the N-O bond (Probable). There are several options for the latter step (Probable). One option is that iboF directly hydroxylates the amide nitrogen formed by iboA to produce a hydroxamic acid species (Probable). Another option is that iboF hydroxylates an external N-containing compound, whose resulting N-O bond is subsequently introduced into the hydroxyglutamate scaffold (Probable). The paralogous PLP-dependent cystathionine gamma-synthase-like enzymes iboG1 and iboG2 are likely involved in substitution of the OH group at position 3 by the O-N moiety (Probable). The first cyclic intermediate is most probably tricholomic acid which is likely desaturated to ibotenic acid by the cytochrome P450 monooxygenase iboC (Probable).</text>
</comment>
<comment type="cofactor">
    <cofactor evidence="1">
        <name>heme</name>
        <dbReference type="ChEBI" id="CHEBI:30413"/>
    </cofactor>
</comment>
<comment type="pathway">
    <text evidence="6">Secondary metabolite biosynthesis.</text>
</comment>
<comment type="subcellular location">
    <subcellularLocation>
        <location evidence="2">Membrane</location>
        <topology evidence="2">Single-pass membrane protein</topology>
    </subcellularLocation>
</comment>
<comment type="induction">
    <text evidence="3">Expression is highly induced during artificial growth in symbiosis with Populus, which is close to its natural condition.</text>
</comment>
<comment type="similarity">
    <text evidence="5">Belongs to the cytochrome P450 family.</text>
</comment>
<gene>
    <name evidence="4" type="primary">iboC</name>
    <name type="ORF">M378DRAFT_133714</name>
</gene>
<name>IBOC_AMAMK</name>